<sequence length="161" mass="17754">MNPRRKKRLGIVLAIFIGISATIGLMLYALNQNMDLFYTPTELVNGKPDGTKPEVGQRLRIGGMVVVGSVRRDPNSLKVSFDLHDVGPKVTITYEGILPDLFREGQGIVAQGVLKDATTVEAFEVLAKHDEEYMPPEIAEAMKKTHEPLQYSSEQKQGSGE</sequence>
<reference key="1">
    <citation type="journal article" date="2003" name="Lancet">
        <title>Genome sequence of Vibrio parahaemolyticus: a pathogenic mechanism distinct from that of V. cholerae.</title>
        <authorList>
            <person name="Makino K."/>
            <person name="Oshima K."/>
            <person name="Kurokawa K."/>
            <person name="Yokoyama K."/>
            <person name="Uda T."/>
            <person name="Tagomori K."/>
            <person name="Iijima Y."/>
            <person name="Najima M."/>
            <person name="Nakano M."/>
            <person name="Yamashita A."/>
            <person name="Kubota Y."/>
            <person name="Kimura S."/>
            <person name="Yasunaga T."/>
            <person name="Honda T."/>
            <person name="Shinagawa H."/>
            <person name="Hattori M."/>
            <person name="Iida T."/>
        </authorList>
    </citation>
    <scope>NUCLEOTIDE SEQUENCE [LARGE SCALE GENOMIC DNA]</scope>
    <source>
        <strain>RIMD 2210633</strain>
    </source>
</reference>
<accession>Q87ML2</accession>
<proteinExistence type="inferred from homology"/>
<name>CCME_VIBPA</name>
<evidence type="ECO:0000255" key="1">
    <source>
        <dbReference type="HAMAP-Rule" id="MF_01959"/>
    </source>
</evidence>
<evidence type="ECO:0000256" key="2">
    <source>
        <dbReference type="SAM" id="MobiDB-lite"/>
    </source>
</evidence>
<dbReference type="EMBL" id="BA000031">
    <property type="protein sequence ID" value="BAC60482.1"/>
    <property type="molecule type" value="Genomic_DNA"/>
</dbReference>
<dbReference type="RefSeq" id="NP_798598.1">
    <property type="nucleotide sequence ID" value="NC_004603.1"/>
</dbReference>
<dbReference type="RefSeq" id="WP_005457727.1">
    <property type="nucleotide sequence ID" value="NC_004603.1"/>
</dbReference>
<dbReference type="SMR" id="Q87ML2"/>
<dbReference type="GeneID" id="1189732"/>
<dbReference type="KEGG" id="vpa:VP2219"/>
<dbReference type="PATRIC" id="fig|223926.6.peg.2122"/>
<dbReference type="eggNOG" id="COG2332">
    <property type="taxonomic scope" value="Bacteria"/>
</dbReference>
<dbReference type="HOGENOM" id="CLU_079503_1_0_6"/>
<dbReference type="Proteomes" id="UP000002493">
    <property type="component" value="Chromosome 1"/>
</dbReference>
<dbReference type="GO" id="GO:0005886">
    <property type="term" value="C:plasma membrane"/>
    <property type="evidence" value="ECO:0007669"/>
    <property type="project" value="UniProtKB-SubCell"/>
</dbReference>
<dbReference type="GO" id="GO:0020037">
    <property type="term" value="F:heme binding"/>
    <property type="evidence" value="ECO:0007669"/>
    <property type="project" value="InterPro"/>
</dbReference>
<dbReference type="GO" id="GO:0046872">
    <property type="term" value="F:metal ion binding"/>
    <property type="evidence" value="ECO:0007669"/>
    <property type="project" value="UniProtKB-KW"/>
</dbReference>
<dbReference type="GO" id="GO:0017004">
    <property type="term" value="P:cytochrome complex assembly"/>
    <property type="evidence" value="ECO:0007669"/>
    <property type="project" value="UniProtKB-KW"/>
</dbReference>
<dbReference type="FunFam" id="2.40.50.140:FF:000104">
    <property type="entry name" value="Cytochrome c-type biogenesis protein CcmE"/>
    <property type="match status" value="1"/>
</dbReference>
<dbReference type="Gene3D" id="2.40.50.140">
    <property type="entry name" value="Nucleic acid-binding proteins"/>
    <property type="match status" value="1"/>
</dbReference>
<dbReference type="HAMAP" id="MF_01959">
    <property type="entry name" value="CcmE"/>
    <property type="match status" value="1"/>
</dbReference>
<dbReference type="InterPro" id="IPR004329">
    <property type="entry name" value="CcmE"/>
</dbReference>
<dbReference type="InterPro" id="IPR036127">
    <property type="entry name" value="CcmE-like_sf"/>
</dbReference>
<dbReference type="InterPro" id="IPR012340">
    <property type="entry name" value="NA-bd_OB-fold"/>
</dbReference>
<dbReference type="NCBIfam" id="NF009638">
    <property type="entry name" value="PRK13165.1"/>
    <property type="match status" value="1"/>
</dbReference>
<dbReference type="NCBIfam" id="NF009727">
    <property type="entry name" value="PRK13254.1-1"/>
    <property type="match status" value="1"/>
</dbReference>
<dbReference type="NCBIfam" id="NF009729">
    <property type="entry name" value="PRK13254.1-3"/>
    <property type="match status" value="1"/>
</dbReference>
<dbReference type="PANTHER" id="PTHR34128">
    <property type="entry name" value="CYTOCHROME C-TYPE BIOGENESIS PROTEIN CCME HOMOLOG, MITOCHONDRIAL"/>
    <property type="match status" value="1"/>
</dbReference>
<dbReference type="PANTHER" id="PTHR34128:SF2">
    <property type="entry name" value="CYTOCHROME C-TYPE BIOGENESIS PROTEIN CCME HOMOLOG, MITOCHONDRIAL"/>
    <property type="match status" value="1"/>
</dbReference>
<dbReference type="Pfam" id="PF03100">
    <property type="entry name" value="CcmE"/>
    <property type="match status" value="1"/>
</dbReference>
<dbReference type="SUPFAM" id="SSF82093">
    <property type="entry name" value="Heme chaperone CcmE"/>
    <property type="match status" value="1"/>
</dbReference>
<organism>
    <name type="scientific">Vibrio parahaemolyticus serotype O3:K6 (strain RIMD 2210633)</name>
    <dbReference type="NCBI Taxonomy" id="223926"/>
    <lineage>
        <taxon>Bacteria</taxon>
        <taxon>Pseudomonadati</taxon>
        <taxon>Pseudomonadota</taxon>
        <taxon>Gammaproteobacteria</taxon>
        <taxon>Vibrionales</taxon>
        <taxon>Vibrionaceae</taxon>
        <taxon>Vibrio</taxon>
    </lineage>
</organism>
<gene>
    <name evidence="1" type="primary">ccmE</name>
    <name evidence="1" type="synonym">cycJ</name>
    <name type="ordered locus">VP2219</name>
</gene>
<feature type="chain" id="PRO_0000238874" description="Cytochrome c-type biogenesis protein CcmE">
    <location>
        <begin position="1"/>
        <end position="161"/>
    </location>
</feature>
<feature type="topological domain" description="Cytoplasmic" evidence="1">
    <location>
        <begin position="1"/>
        <end position="8"/>
    </location>
</feature>
<feature type="transmembrane region" description="Helical; Signal-anchor for type II membrane protein" evidence="1">
    <location>
        <begin position="9"/>
        <end position="29"/>
    </location>
</feature>
<feature type="topological domain" description="Periplasmic" evidence="1">
    <location>
        <begin position="30"/>
        <end position="161"/>
    </location>
</feature>
<feature type="region of interest" description="Disordered" evidence="2">
    <location>
        <begin position="142"/>
        <end position="161"/>
    </location>
</feature>
<feature type="compositionally biased region" description="Polar residues" evidence="2">
    <location>
        <begin position="150"/>
        <end position="161"/>
    </location>
</feature>
<feature type="binding site" description="covalent" evidence="1">
    <location>
        <position position="129"/>
    </location>
    <ligand>
        <name>heme</name>
        <dbReference type="ChEBI" id="CHEBI:30413"/>
    </ligand>
</feature>
<feature type="binding site" description="axial binding residue" evidence="1">
    <location>
        <position position="133"/>
    </location>
    <ligand>
        <name>heme</name>
        <dbReference type="ChEBI" id="CHEBI:30413"/>
    </ligand>
    <ligandPart>
        <name>Fe</name>
        <dbReference type="ChEBI" id="CHEBI:18248"/>
    </ligandPart>
</feature>
<keyword id="KW-0997">Cell inner membrane</keyword>
<keyword id="KW-1003">Cell membrane</keyword>
<keyword id="KW-0201">Cytochrome c-type biogenesis</keyword>
<keyword id="KW-0349">Heme</keyword>
<keyword id="KW-0408">Iron</keyword>
<keyword id="KW-0472">Membrane</keyword>
<keyword id="KW-0479">Metal-binding</keyword>
<keyword id="KW-0735">Signal-anchor</keyword>
<keyword id="KW-0812">Transmembrane</keyword>
<keyword id="KW-1133">Transmembrane helix</keyword>
<protein>
    <recommendedName>
        <fullName evidence="1">Cytochrome c-type biogenesis protein CcmE</fullName>
    </recommendedName>
    <alternativeName>
        <fullName evidence="1">Cytochrome c maturation protein E</fullName>
    </alternativeName>
    <alternativeName>
        <fullName evidence="1">Heme chaperone CcmE</fullName>
    </alternativeName>
</protein>
<comment type="function">
    <text evidence="1">Heme chaperone required for the biogenesis of c-type cytochromes. Transiently binds heme delivered by CcmC and transfers the heme to apo-cytochromes in a process facilitated by CcmF and CcmH.</text>
</comment>
<comment type="subcellular location">
    <subcellularLocation>
        <location evidence="1">Cell inner membrane</location>
        <topology evidence="1">Single-pass type II membrane protein</topology>
        <orientation evidence="1">Periplasmic side</orientation>
    </subcellularLocation>
</comment>
<comment type="similarity">
    <text evidence="1">Belongs to the CcmE/CycJ family.</text>
</comment>